<reference key="1">
    <citation type="journal article" date="2005" name="Genome Res.">
        <title>Coping with cold: the genome of the versatile marine Antarctica bacterium Pseudoalteromonas haloplanktis TAC125.</title>
        <authorList>
            <person name="Medigue C."/>
            <person name="Krin E."/>
            <person name="Pascal G."/>
            <person name="Barbe V."/>
            <person name="Bernsel A."/>
            <person name="Bertin P.N."/>
            <person name="Cheung F."/>
            <person name="Cruveiller S."/>
            <person name="D'Amico S."/>
            <person name="Duilio A."/>
            <person name="Fang G."/>
            <person name="Feller G."/>
            <person name="Ho C."/>
            <person name="Mangenot S."/>
            <person name="Marino G."/>
            <person name="Nilsson J."/>
            <person name="Parrilli E."/>
            <person name="Rocha E.P.C."/>
            <person name="Rouy Z."/>
            <person name="Sekowska A."/>
            <person name="Tutino M.L."/>
            <person name="Vallenet D."/>
            <person name="von Heijne G."/>
            <person name="Danchin A."/>
        </authorList>
    </citation>
    <scope>NUCLEOTIDE SEQUENCE [LARGE SCALE GENOMIC DNA]</scope>
    <source>
        <strain>TAC 125</strain>
    </source>
</reference>
<proteinExistence type="inferred from homology"/>
<organism>
    <name type="scientific">Pseudoalteromonas translucida (strain TAC 125)</name>
    <dbReference type="NCBI Taxonomy" id="326442"/>
    <lineage>
        <taxon>Bacteria</taxon>
        <taxon>Pseudomonadati</taxon>
        <taxon>Pseudomonadota</taxon>
        <taxon>Gammaproteobacteria</taxon>
        <taxon>Alteromonadales</taxon>
        <taxon>Pseudoalteromonadaceae</taxon>
        <taxon>Pseudoalteromonas</taxon>
    </lineage>
</organism>
<comment type="function">
    <text evidence="1">Transfers and isomerizes the ribose moiety from AdoMet to the 7-aminomethyl group of 7-deazaguanine (preQ1-tRNA) to give epoxyqueuosine (oQ-tRNA).</text>
</comment>
<comment type="catalytic activity">
    <reaction evidence="1">
        <text>7-aminomethyl-7-carbaguanosine(34) in tRNA + S-adenosyl-L-methionine = epoxyqueuosine(34) in tRNA + adenine + L-methionine + 2 H(+)</text>
        <dbReference type="Rhea" id="RHEA:32155"/>
        <dbReference type="Rhea" id="RHEA-COMP:10342"/>
        <dbReference type="Rhea" id="RHEA-COMP:18582"/>
        <dbReference type="ChEBI" id="CHEBI:15378"/>
        <dbReference type="ChEBI" id="CHEBI:16708"/>
        <dbReference type="ChEBI" id="CHEBI:57844"/>
        <dbReference type="ChEBI" id="CHEBI:59789"/>
        <dbReference type="ChEBI" id="CHEBI:82833"/>
        <dbReference type="ChEBI" id="CHEBI:194443"/>
        <dbReference type="EC" id="2.4.99.17"/>
    </reaction>
</comment>
<comment type="pathway">
    <text evidence="1">tRNA modification; tRNA-queuosine biosynthesis.</text>
</comment>
<comment type="subunit">
    <text evidence="1">Monomer.</text>
</comment>
<comment type="subcellular location">
    <subcellularLocation>
        <location evidence="1">Cytoplasm</location>
    </subcellularLocation>
</comment>
<comment type="similarity">
    <text evidence="1">Belongs to the QueA family.</text>
</comment>
<gene>
    <name evidence="1" type="primary">queA</name>
    <name type="ordered locus">PSHAa0318</name>
</gene>
<keyword id="KW-0963">Cytoplasm</keyword>
<keyword id="KW-0671">Queuosine biosynthesis</keyword>
<keyword id="KW-1185">Reference proteome</keyword>
<keyword id="KW-0949">S-adenosyl-L-methionine</keyword>
<keyword id="KW-0808">Transferase</keyword>
<sequence length="343" mass="37984">MRVADFSFDLPDELIARFPKQDRTSSRLLSLDGPSGVVEHKVFSDLLELVNENDLLVFNNTRVIPARMFGQKASGGKVEVLVERVLDEHRVLAHVRASKSLKPGNEVILEGKAKATMVARHDTLFELEFEHSQNVLDILNDIGHMPLPPYIDRPDNEADRERYQTVYGEKPGAVAAPTAGLHFDDKLMTALKNKGVQMAFVTLHVGAGTFQPVRVATVDEHIMHSEYIEVPDDVVAAVANTKANGGRVIAIGTTSVRSLESAAKVHGGKLDTYFGDTDIFIYPGYQFNVVDAMITNFHLPESTLIMLVSAFAGQNNIMGAYNTAIEQQYRFFSYGDAMFLTRK</sequence>
<accession>Q3ILB9</accession>
<feature type="chain" id="PRO_0000231358" description="S-adenosylmethionine:tRNA ribosyltransferase-isomerase">
    <location>
        <begin position="1"/>
        <end position="343"/>
    </location>
</feature>
<dbReference type="EC" id="2.4.99.17" evidence="1"/>
<dbReference type="EMBL" id="CR954246">
    <property type="protein sequence ID" value="CAI85417.1"/>
    <property type="molecule type" value="Genomic_DNA"/>
</dbReference>
<dbReference type="SMR" id="Q3ILB9"/>
<dbReference type="STRING" id="326442.PSHAa0318"/>
<dbReference type="KEGG" id="pha:PSHAa0318"/>
<dbReference type="PATRIC" id="fig|326442.8.peg.304"/>
<dbReference type="eggNOG" id="COG0809">
    <property type="taxonomic scope" value="Bacteria"/>
</dbReference>
<dbReference type="HOGENOM" id="CLU_039110_1_0_6"/>
<dbReference type="BioCyc" id="PHAL326442:PSHA_RS01575-MONOMER"/>
<dbReference type="UniPathway" id="UPA00392"/>
<dbReference type="Proteomes" id="UP000006843">
    <property type="component" value="Chromosome I"/>
</dbReference>
<dbReference type="GO" id="GO:0005737">
    <property type="term" value="C:cytoplasm"/>
    <property type="evidence" value="ECO:0007669"/>
    <property type="project" value="UniProtKB-SubCell"/>
</dbReference>
<dbReference type="GO" id="GO:0051075">
    <property type="term" value="F:S-adenosylmethionine:tRNA ribosyltransferase-isomerase activity"/>
    <property type="evidence" value="ECO:0007669"/>
    <property type="project" value="UniProtKB-EC"/>
</dbReference>
<dbReference type="GO" id="GO:0008616">
    <property type="term" value="P:queuosine biosynthetic process"/>
    <property type="evidence" value="ECO:0007669"/>
    <property type="project" value="UniProtKB-UniRule"/>
</dbReference>
<dbReference type="GO" id="GO:0002099">
    <property type="term" value="P:tRNA wobble guanine modification"/>
    <property type="evidence" value="ECO:0007669"/>
    <property type="project" value="TreeGrafter"/>
</dbReference>
<dbReference type="FunFam" id="2.40.10.240:FF:000001">
    <property type="entry name" value="S-adenosylmethionine:tRNA ribosyltransferase-isomerase"/>
    <property type="match status" value="1"/>
</dbReference>
<dbReference type="FunFam" id="3.40.1780.10:FF:000001">
    <property type="entry name" value="S-adenosylmethionine:tRNA ribosyltransferase-isomerase"/>
    <property type="match status" value="1"/>
</dbReference>
<dbReference type="Gene3D" id="2.40.10.240">
    <property type="entry name" value="QueA-like"/>
    <property type="match status" value="1"/>
</dbReference>
<dbReference type="Gene3D" id="3.40.1780.10">
    <property type="entry name" value="QueA-like"/>
    <property type="match status" value="1"/>
</dbReference>
<dbReference type="HAMAP" id="MF_00113">
    <property type="entry name" value="QueA"/>
    <property type="match status" value="1"/>
</dbReference>
<dbReference type="InterPro" id="IPR003699">
    <property type="entry name" value="QueA"/>
</dbReference>
<dbReference type="InterPro" id="IPR042118">
    <property type="entry name" value="QueA_dom1"/>
</dbReference>
<dbReference type="InterPro" id="IPR042119">
    <property type="entry name" value="QueA_dom2"/>
</dbReference>
<dbReference type="InterPro" id="IPR036100">
    <property type="entry name" value="QueA_sf"/>
</dbReference>
<dbReference type="NCBIfam" id="NF001140">
    <property type="entry name" value="PRK00147.1"/>
    <property type="match status" value="1"/>
</dbReference>
<dbReference type="NCBIfam" id="TIGR00113">
    <property type="entry name" value="queA"/>
    <property type="match status" value="1"/>
</dbReference>
<dbReference type="PANTHER" id="PTHR30307">
    <property type="entry name" value="S-ADENOSYLMETHIONINE:TRNA RIBOSYLTRANSFERASE-ISOMERASE"/>
    <property type="match status" value="1"/>
</dbReference>
<dbReference type="PANTHER" id="PTHR30307:SF0">
    <property type="entry name" value="S-ADENOSYLMETHIONINE:TRNA RIBOSYLTRANSFERASE-ISOMERASE"/>
    <property type="match status" value="1"/>
</dbReference>
<dbReference type="Pfam" id="PF02547">
    <property type="entry name" value="Queuosine_synth"/>
    <property type="match status" value="1"/>
</dbReference>
<dbReference type="SUPFAM" id="SSF111337">
    <property type="entry name" value="QueA-like"/>
    <property type="match status" value="1"/>
</dbReference>
<name>QUEA_PSET1</name>
<protein>
    <recommendedName>
        <fullName evidence="1">S-adenosylmethionine:tRNA ribosyltransferase-isomerase</fullName>
        <ecNumber evidence="1">2.4.99.17</ecNumber>
    </recommendedName>
    <alternativeName>
        <fullName evidence="1">Queuosine biosynthesis protein QueA</fullName>
    </alternativeName>
</protein>
<evidence type="ECO:0000255" key="1">
    <source>
        <dbReference type="HAMAP-Rule" id="MF_00113"/>
    </source>
</evidence>